<dbReference type="EMBL" id="CP000909">
    <property type="protein sequence ID" value="ABY35976.1"/>
    <property type="molecule type" value="Genomic_DNA"/>
</dbReference>
<dbReference type="RefSeq" id="WP_012258629.1">
    <property type="nucleotide sequence ID" value="NC_010175.1"/>
</dbReference>
<dbReference type="RefSeq" id="YP_001636365.1">
    <property type="nucleotide sequence ID" value="NC_010175.1"/>
</dbReference>
<dbReference type="SMR" id="A9WK98"/>
<dbReference type="STRING" id="324602.Caur_2774"/>
<dbReference type="EnsemblBacteria" id="ABY35976">
    <property type="protein sequence ID" value="ABY35976"/>
    <property type="gene ID" value="Caur_2774"/>
</dbReference>
<dbReference type="KEGG" id="cau:Caur_2774"/>
<dbReference type="PATRIC" id="fig|324602.8.peg.3123"/>
<dbReference type="eggNOG" id="COG0375">
    <property type="taxonomic scope" value="Bacteria"/>
</dbReference>
<dbReference type="HOGENOM" id="CLU_126929_3_0_0"/>
<dbReference type="InParanoid" id="A9WK98"/>
<dbReference type="Proteomes" id="UP000002008">
    <property type="component" value="Chromosome"/>
</dbReference>
<dbReference type="GO" id="GO:0016151">
    <property type="term" value="F:nickel cation binding"/>
    <property type="evidence" value="ECO:0000318"/>
    <property type="project" value="GO_Central"/>
</dbReference>
<dbReference type="GO" id="GO:0008270">
    <property type="term" value="F:zinc ion binding"/>
    <property type="evidence" value="ECO:0000318"/>
    <property type="project" value="GO_Central"/>
</dbReference>
<dbReference type="GO" id="GO:0051604">
    <property type="term" value="P:protein maturation"/>
    <property type="evidence" value="ECO:0000318"/>
    <property type="project" value="GO_Central"/>
</dbReference>
<dbReference type="GO" id="GO:0036211">
    <property type="term" value="P:protein modification process"/>
    <property type="evidence" value="ECO:0007669"/>
    <property type="project" value="UniProtKB-UniRule"/>
</dbReference>
<dbReference type="Gene3D" id="3.30.2320.80">
    <property type="match status" value="1"/>
</dbReference>
<dbReference type="HAMAP" id="MF_00213">
    <property type="entry name" value="HypA_HybF"/>
    <property type="match status" value="1"/>
</dbReference>
<dbReference type="InterPro" id="IPR020538">
    <property type="entry name" value="Hydgase_Ni_incorp_HypA/HybF_CS"/>
</dbReference>
<dbReference type="InterPro" id="IPR000688">
    <property type="entry name" value="HypA/HybF"/>
</dbReference>
<dbReference type="NCBIfam" id="TIGR00100">
    <property type="entry name" value="hypA"/>
    <property type="match status" value="1"/>
</dbReference>
<dbReference type="PANTHER" id="PTHR34535">
    <property type="entry name" value="HYDROGENASE MATURATION FACTOR HYPA"/>
    <property type="match status" value="1"/>
</dbReference>
<dbReference type="PANTHER" id="PTHR34535:SF3">
    <property type="entry name" value="HYDROGENASE MATURATION FACTOR HYPA"/>
    <property type="match status" value="1"/>
</dbReference>
<dbReference type="Pfam" id="PF01155">
    <property type="entry name" value="HypA"/>
    <property type="match status" value="1"/>
</dbReference>
<dbReference type="PIRSF" id="PIRSF004761">
    <property type="entry name" value="Hydrgn_mat_HypA"/>
    <property type="match status" value="1"/>
</dbReference>
<dbReference type="PROSITE" id="PS01249">
    <property type="entry name" value="HYPA"/>
    <property type="match status" value="1"/>
</dbReference>
<proteinExistence type="inferred from homology"/>
<protein>
    <recommendedName>
        <fullName evidence="1">Hydrogenase maturation factor HypA</fullName>
    </recommendedName>
</protein>
<reference key="1">
    <citation type="journal article" date="2011" name="BMC Genomics">
        <title>Complete genome sequence of the filamentous anoxygenic phototrophic bacterium Chloroflexus aurantiacus.</title>
        <authorList>
            <person name="Tang K.H."/>
            <person name="Barry K."/>
            <person name="Chertkov O."/>
            <person name="Dalin E."/>
            <person name="Han C.S."/>
            <person name="Hauser L.J."/>
            <person name="Honchak B.M."/>
            <person name="Karbach L.E."/>
            <person name="Land M.L."/>
            <person name="Lapidus A."/>
            <person name="Larimer F.W."/>
            <person name="Mikhailova N."/>
            <person name="Pitluck S."/>
            <person name="Pierson B.K."/>
            <person name="Blankenship R.E."/>
        </authorList>
    </citation>
    <scope>NUCLEOTIDE SEQUENCE [LARGE SCALE GENOMIC DNA]</scope>
    <source>
        <strain>ATCC 29366 / DSM 635 / J-10-fl</strain>
    </source>
</reference>
<keyword id="KW-0479">Metal-binding</keyword>
<keyword id="KW-0533">Nickel</keyword>
<keyword id="KW-1185">Reference proteome</keyword>
<keyword id="KW-0862">Zinc</keyword>
<feature type="chain" id="PRO_1000078036" description="Hydrogenase maturation factor HypA">
    <location>
        <begin position="1"/>
        <end position="114"/>
    </location>
</feature>
<feature type="binding site" evidence="1">
    <location>
        <position position="2"/>
    </location>
    <ligand>
        <name>Ni(2+)</name>
        <dbReference type="ChEBI" id="CHEBI:49786"/>
    </ligand>
</feature>
<feature type="binding site" evidence="1">
    <location>
        <position position="73"/>
    </location>
    <ligand>
        <name>Zn(2+)</name>
        <dbReference type="ChEBI" id="CHEBI:29105"/>
    </ligand>
</feature>
<feature type="binding site" evidence="1">
    <location>
        <position position="76"/>
    </location>
    <ligand>
        <name>Zn(2+)</name>
        <dbReference type="ChEBI" id="CHEBI:29105"/>
    </ligand>
</feature>
<feature type="binding site" evidence="1">
    <location>
        <position position="90"/>
    </location>
    <ligand>
        <name>Zn(2+)</name>
        <dbReference type="ChEBI" id="CHEBI:29105"/>
    </ligand>
</feature>
<feature type="binding site" evidence="1">
    <location>
        <position position="93"/>
    </location>
    <ligand>
        <name>Zn(2+)</name>
        <dbReference type="ChEBI" id="CHEBI:29105"/>
    </ligand>
</feature>
<comment type="function">
    <text evidence="1">Involved in the maturation of [NiFe] hydrogenases. Required for nickel insertion into the metal center of the hydrogenase.</text>
</comment>
<comment type="similarity">
    <text evidence="1">Belongs to the HypA/HybF family.</text>
</comment>
<organism>
    <name type="scientific">Chloroflexus aurantiacus (strain ATCC 29366 / DSM 635 / J-10-fl)</name>
    <dbReference type="NCBI Taxonomy" id="324602"/>
    <lineage>
        <taxon>Bacteria</taxon>
        <taxon>Bacillati</taxon>
        <taxon>Chloroflexota</taxon>
        <taxon>Chloroflexia</taxon>
        <taxon>Chloroflexales</taxon>
        <taxon>Chloroflexineae</taxon>
        <taxon>Chloroflexaceae</taxon>
        <taxon>Chloroflexus</taxon>
    </lineage>
</organism>
<evidence type="ECO:0000255" key="1">
    <source>
        <dbReference type="HAMAP-Rule" id="MF_00213"/>
    </source>
</evidence>
<sequence>MHELSIAHNIVTIASDAAAEAGVDRISAVHLRIGALAGVVADALRFSFAIAAEGTPLAGAELIIEEVPVVVFCPDCNAEVTLTNPRLFRCPRCDRPCGQIVHGRELELVALETP</sequence>
<accession>A9WK98</accession>
<name>HYPA_CHLAA</name>
<gene>
    <name evidence="1" type="primary">hypA</name>
    <name type="ordered locus">Caur_2774</name>
</gene>